<accession>O95747</accession>
<accession>Q3LR53</accession>
<accession>Q7Z501</accession>
<accession>Q9UPQ1</accession>
<proteinExistence type="evidence at protein level"/>
<keyword id="KW-0002">3D-structure</keyword>
<keyword id="KW-0007">Acetylation</keyword>
<keyword id="KW-0067">ATP-binding</keyword>
<keyword id="KW-0963">Cytoplasm</keyword>
<keyword id="KW-0418">Kinase</keyword>
<keyword id="KW-0460">Magnesium</keyword>
<keyword id="KW-0479">Metal-binding</keyword>
<keyword id="KW-0547">Nucleotide-binding</keyword>
<keyword id="KW-0597">Phosphoprotein</keyword>
<keyword id="KW-1267">Proteomics identification</keyword>
<keyword id="KW-1185">Reference proteome</keyword>
<keyword id="KW-0723">Serine/threonine-protein kinase</keyword>
<keyword id="KW-0808">Transferase</keyword>
<gene>
    <name evidence="29" type="primary">OXSR1</name>
    <name evidence="28" type="synonym">KIAA1101</name>
    <name evidence="27" type="synonym">OSR1</name>
</gene>
<sequence>MSEDSSALPWSINRDDYELQEVIGSGATAVVQAAYCAPKKEKVAIKRINLEKCQTSMDELLKEIQAMSQCHHPNIVSYYTSFVVKDELWLVMKLLSGGSVLDIIKHIVAKGEHKSGVLDESTIATILREVLEGLEYLHKNGQIHRDVKAGNILLGEDGSVQIADFGVSAFLATGGDITRNKVRKTFVGTPCWMAPEVMEQVRGYDFKADIWSFGITAIELATGAAPYHKYPPMKVLMLTLQNDPPSLETGVQDKEMLKKYGKSFRKMISLCLQKDPEKRPTAAELLRHKFFQKAKNKEFLQEKTLQRAPTISERAKKVRRVPGSSGRLHKTEDGGWEWSDDEFDEESEEGKAAISQLRSPRVKESISNSELFPTTDPVGTLLQVPEQISAHLPQPAGQIATQPTQVSLPPTAEPAKTAQALSSGSGSQETKIPISLVLRLRNSKKELNDIRFEFTPGRDTAEGVSQELISAGLVDGRDLVIVAANLQKIVEEPQSNRSVTFKLASGVEGSDIPDDGKLIGFAQLSIS</sequence>
<evidence type="ECO:0000250" key="1">
    <source>
        <dbReference type="UniProtKB" id="Q9Z1W9"/>
    </source>
</evidence>
<evidence type="ECO:0000255" key="2">
    <source>
        <dbReference type="PROSITE-ProRule" id="PRU00159"/>
    </source>
</evidence>
<evidence type="ECO:0000256" key="3">
    <source>
        <dbReference type="SAM" id="MobiDB-lite"/>
    </source>
</evidence>
<evidence type="ECO:0000269" key="4">
    <source>
    </source>
</evidence>
<evidence type="ECO:0000269" key="5">
    <source>
    </source>
</evidence>
<evidence type="ECO:0000269" key="6">
    <source>
    </source>
</evidence>
<evidence type="ECO:0000269" key="7">
    <source>
    </source>
</evidence>
<evidence type="ECO:0000269" key="8">
    <source>
    </source>
</evidence>
<evidence type="ECO:0000269" key="9">
    <source>
    </source>
</evidence>
<evidence type="ECO:0000269" key="10">
    <source>
    </source>
</evidence>
<evidence type="ECO:0000269" key="11">
    <source>
    </source>
</evidence>
<evidence type="ECO:0000269" key="12">
    <source>
    </source>
</evidence>
<evidence type="ECO:0000269" key="13">
    <source>
    </source>
</evidence>
<evidence type="ECO:0000269" key="14">
    <source>
    </source>
</evidence>
<evidence type="ECO:0000269" key="15">
    <source>
    </source>
</evidence>
<evidence type="ECO:0000269" key="16">
    <source>
    </source>
</evidence>
<evidence type="ECO:0000269" key="17">
    <source>
    </source>
</evidence>
<evidence type="ECO:0000269" key="18">
    <source>
    </source>
</evidence>
<evidence type="ECO:0000269" key="19">
    <source>
    </source>
</evidence>
<evidence type="ECO:0000269" key="20">
    <source>
    </source>
</evidence>
<evidence type="ECO:0000269" key="21">
    <source>
    </source>
</evidence>
<evidence type="ECO:0000269" key="22">
    <source>
    </source>
</evidence>
<evidence type="ECO:0000269" key="23">
    <source ref="3"/>
</evidence>
<evidence type="ECO:0000305" key="24"/>
<evidence type="ECO:0000312" key="25">
    <source>
        <dbReference type="EMBL" id="AAH08726.1"/>
    </source>
</evidence>
<evidence type="ECO:0000312" key="26">
    <source>
        <dbReference type="EMBL" id="AAP97192.1"/>
    </source>
</evidence>
<evidence type="ECO:0000312" key="27">
    <source>
        <dbReference type="EMBL" id="BAA75674.1"/>
    </source>
</evidence>
<evidence type="ECO:0000312" key="28">
    <source>
        <dbReference type="EMBL" id="BAA83053.2"/>
    </source>
</evidence>
<evidence type="ECO:0000312" key="29">
    <source>
        <dbReference type="HGNC" id="HGNC:8508"/>
    </source>
</evidence>
<evidence type="ECO:0007744" key="30">
    <source>
        <dbReference type="PDB" id="2V3S"/>
    </source>
</evidence>
<evidence type="ECO:0007744" key="31">
    <source>
    </source>
</evidence>
<evidence type="ECO:0007744" key="32">
    <source>
    </source>
</evidence>
<evidence type="ECO:0007744" key="33">
    <source>
    </source>
</evidence>
<evidence type="ECO:0007744" key="34">
    <source>
    </source>
</evidence>
<evidence type="ECO:0007744" key="35">
    <source>
    </source>
</evidence>
<evidence type="ECO:0007744" key="36">
    <source>
    </source>
</evidence>
<evidence type="ECO:0007744" key="37">
    <source>
    </source>
</evidence>
<evidence type="ECO:0007744" key="38">
    <source>
    </source>
</evidence>
<evidence type="ECO:0007744" key="39">
    <source>
    </source>
</evidence>
<evidence type="ECO:0007744" key="40">
    <source>
    </source>
</evidence>
<evidence type="ECO:0007829" key="41">
    <source>
        <dbReference type="PDB" id="2V3S"/>
    </source>
</evidence>
<evidence type="ECO:0007829" key="42">
    <source>
        <dbReference type="PDB" id="2VWI"/>
    </source>
</evidence>
<evidence type="ECO:0007829" key="43">
    <source>
        <dbReference type="PDB" id="3DAK"/>
    </source>
</evidence>
<evidence type="ECO:0007829" key="44">
    <source>
        <dbReference type="PDB" id="7OKW"/>
    </source>
</evidence>
<comment type="function">
    <text evidence="5 6 7 11 12 13 14 15 18 19 20 21 22">Effector serine/threonine-protein kinase component of the WNK-SPAK/OSR1 kinase cascade, which is involved in various processes, such as ion transport, response to hypertonic stress and blood pressure (PubMed:16669787, PubMed:18270262, PubMed:21321328, PubMed:34289367). Specifically recognizes and binds proteins with a RFXV motif (PubMed:16669787, PubMed:17721439, PubMed:21321328). Acts downstream of WNK kinases (WNK1, WNK2, WNK3 or WNK4): following activation by WNK kinases, catalyzes phosphorylation of ion cotransporters, such as SLC12A1/NKCC2, SLC12A2/NKCC1, SLC12A3/NCC, SLC12A5/KCC2 or SLC12A6/KCC3, regulating their activity (PubMed:17721439). Mediates regulatory volume increase in response to hyperosmotic stress by catalyzing phosphorylation of ion cotransporters SLC12A1/NKCC2, SLC12A2/NKCC1 and SLC12A6/KCC3 downstream of WNK1 and WNK3 kinases (PubMed:16669787, PubMed:21321328). Phosphorylation of Na-K-Cl cotransporters SLC12A2/NKCC1 and SLC12A2/NKCC1 promote their activation and ion influx; simultaneously, phosphorylation of K-Cl cotransporters SLC12A5/KCC2 and SLC12A6/KCC3 inhibit their activity, blocking ion efflux (PubMed:16669787, PubMed:19665974, PubMed:21321328). Acts as a regulator of NaCl reabsorption in the distal nephron by mediating phosphorylation and activation of the thiazide-sensitive Na-Cl cotransporter SLC12A3/NCC in distal convoluted tubule cells of kidney downstream of WNK4 (PubMed:18270262). Also acts as a regulator of angiogenesis in endothelial cells downstream of WNK1 (PubMed:23386621, PubMed:25362046). Acts as an activator of inward rectifier potassium channels KCNJ2/Kir2.1 and KCNJ4/Kir2.3 downstream of WNK1: recognizes and binds the RXFXV/I variant motif on KCNJ2/Kir2.1 and KCNJ4/Kir2.3 and regulates their localization to the cell membrane without mediating their phosphorylation (PubMed:29581290). Phosphorylates RELL1, RELL2 and RELT (PubMed:16389068, PubMed:28688764). Phosphorylates PAK1 (PubMed:14707132). Phosphorylates PLSCR1 in the presence of RELT (PubMed:22052202).</text>
</comment>
<comment type="catalytic activity">
    <reaction evidence="5 14">
        <text>L-seryl-[protein] + ATP = O-phospho-L-seryl-[protein] + ADP + H(+)</text>
        <dbReference type="Rhea" id="RHEA:17989"/>
        <dbReference type="Rhea" id="RHEA-COMP:9863"/>
        <dbReference type="Rhea" id="RHEA-COMP:11604"/>
        <dbReference type="ChEBI" id="CHEBI:15378"/>
        <dbReference type="ChEBI" id="CHEBI:29999"/>
        <dbReference type="ChEBI" id="CHEBI:30616"/>
        <dbReference type="ChEBI" id="CHEBI:83421"/>
        <dbReference type="ChEBI" id="CHEBI:456216"/>
        <dbReference type="EC" id="2.7.11.1"/>
    </reaction>
</comment>
<comment type="catalytic activity">
    <reaction evidence="5 7 12 14">
        <text>L-threonyl-[protein] + ATP = O-phospho-L-threonyl-[protein] + ADP + H(+)</text>
        <dbReference type="Rhea" id="RHEA:46608"/>
        <dbReference type="Rhea" id="RHEA-COMP:11060"/>
        <dbReference type="Rhea" id="RHEA-COMP:11605"/>
        <dbReference type="ChEBI" id="CHEBI:15378"/>
        <dbReference type="ChEBI" id="CHEBI:30013"/>
        <dbReference type="ChEBI" id="CHEBI:30616"/>
        <dbReference type="ChEBI" id="CHEBI:61977"/>
        <dbReference type="ChEBI" id="CHEBI:456216"/>
        <dbReference type="EC" id="2.7.11.1"/>
    </reaction>
</comment>
<comment type="cofactor">
    <cofactor evidence="5">
        <name>Mg(2+)</name>
        <dbReference type="ChEBI" id="CHEBI:18420"/>
    </cofactor>
</comment>
<comment type="activity regulation">
    <text evidence="7 8 9 14 17 18 21 22">Activated following phosphorylation by WNK kinases (WNK1, WNK2, WNK3 or WNK4).</text>
</comment>
<comment type="interaction">
    <interactant intactId="EBI-620853">
        <id>O95747</id>
    </interactant>
    <interactant intactId="EBI-306905">
        <id>Q9Y376</id>
        <label>CAB39</label>
    </interactant>
    <organismsDiffer>false</organismsDiffer>
    <experiments>3</experiments>
</comment>
<comment type="interaction">
    <interactant intactId="EBI-620853">
        <id>O95747</id>
    </interactant>
    <interactant intactId="EBI-620853">
        <id>O95747</id>
        <label>OXSR1</label>
    </interactant>
    <organismsDiffer>false</organismsDiffer>
    <experiments>3</experiments>
</comment>
<comment type="interaction">
    <interactant intactId="EBI-620853">
        <id>O95747</id>
    </interactant>
    <interactant intactId="EBI-10269209">
        <id>Q8NC24</id>
        <label>RELL2</label>
    </interactant>
    <organismsDiffer>false</organismsDiffer>
    <experiments>9</experiments>
</comment>
<comment type="interaction">
    <interactant intactId="EBI-620853">
        <id>O95747</id>
    </interactant>
    <interactant intactId="EBI-2801449">
        <id>P55011</id>
        <label>SLC12A2</label>
    </interactant>
    <organismsDiffer>false</organismsDiffer>
    <experiments>2</experiments>
</comment>
<comment type="interaction">
    <interactant intactId="EBI-620853">
        <id>O95747</id>
    </interactant>
    <interactant intactId="EBI-457907">
        <id>Q9H4A3</id>
        <label>WNK1</label>
    </interactant>
    <organismsDiffer>false</organismsDiffer>
    <experiments>9</experiments>
</comment>
<comment type="interaction">
    <interactant intactId="EBI-620853">
        <id>O95747</id>
    </interactant>
    <interactant intactId="EBI-948521">
        <id>Q9Y3S1</id>
        <label>WNK2</label>
    </interactant>
    <organismsDiffer>false</organismsDiffer>
    <experiments>2</experiments>
</comment>
<comment type="interaction">
    <interactant intactId="EBI-620853">
        <id>O95747</id>
    </interactant>
    <interactant intactId="EBI-766352">
        <id>Q96J92</id>
        <label>WNK4</label>
    </interactant>
    <organismsDiffer>false</organismsDiffer>
    <experiments>12</experiments>
</comment>
<comment type="subcellular location">
    <subcellularLocation>
        <location evidence="16 17">Cytoplasm</location>
    </subcellularLocation>
</comment>
<comment type="tissue specificity">
    <text evidence="4">Ubiquitously expressed in all tissue examined.</text>
</comment>
<comment type="PTM">
    <text evidence="5 7 8 9 14 15 17 21">Phosphorylation at Thr-185 by WNK kinases (WNK1, WNK2, WNK3 or WNK4) is required for activation (PubMed:16669787, PubMed:16832045, PubMed:17190791, PubMed:21321328, PubMed:22989884, PubMed:29581290). Autophosphorylated; promoting its activity (PubMed:14707132, PubMed:22052202).</text>
</comment>
<comment type="similarity">
    <text evidence="24">Belongs to the protein kinase superfamily. STE Ser/Thr protein kinase family. STE20 subfamily.</text>
</comment>
<comment type="sequence caution" evidence="24">
    <conflict type="erroneous initiation">
        <sequence resource="EMBL-CDS" id="AAP97192"/>
    </conflict>
</comment>
<comment type="sequence caution" evidence="24">
    <conflict type="frameshift">
        <sequence resource="EMBL-CDS" id="BAA83053"/>
    </conflict>
</comment>
<reference evidence="24 27" key="1">
    <citation type="journal article" date="1999" name="J. Hum. Genet.">
        <title>Isolation and characterization of a novel serine threonine kinase gene on chromosome 3p22-21.3.</title>
        <authorList>
            <person name="Tamari M."/>
            <person name="Daigo Y."/>
            <person name="Nakamura Y."/>
        </authorList>
    </citation>
    <scope>NUCLEOTIDE SEQUENCE [MRNA]</scope>
    <scope>TISSUE SPECIFICITY</scope>
    <scope>VARIANT ILE-304</scope>
    <source>
        <tissue evidence="27">Skeletal muscle</tissue>
    </source>
</reference>
<reference evidence="28" key="2">
    <citation type="journal article" date="1999" name="DNA Res.">
        <title>Prediction of the coding sequences of unidentified human genes. XIV. The complete sequences of 100 new cDNA clones from brain which code for large proteins in vitro.</title>
        <authorList>
            <person name="Kikuno R."/>
            <person name="Nagase T."/>
            <person name="Ishikawa K."/>
            <person name="Hirosawa M."/>
            <person name="Miyajima N."/>
            <person name="Tanaka A."/>
            <person name="Kotani H."/>
            <person name="Nomura N."/>
            <person name="Ohara O."/>
        </authorList>
    </citation>
    <scope>NUCLEOTIDE SEQUENCE [LARGE SCALE MRNA]</scope>
    <source>
        <tissue evidence="28">Brain</tissue>
    </source>
</reference>
<reference evidence="24 26" key="3">
    <citation type="submission" date="2005-09" db="EMBL/GenBank/DDBJ databases">
        <authorList>
            <consortium name="NIEHS SNPs program"/>
        </authorList>
    </citation>
    <scope>NUCLEOTIDE SEQUENCE [GENOMIC DNA]</scope>
    <scope>VARIANTS ILE-304 AND THR-425</scope>
</reference>
<reference evidence="25" key="4">
    <citation type="journal article" date="2004" name="Genome Res.">
        <title>The status, quality, and expansion of the NIH full-length cDNA project: the Mammalian Gene Collection (MGC).</title>
        <authorList>
            <consortium name="The MGC Project Team"/>
        </authorList>
    </citation>
    <scope>NUCLEOTIDE SEQUENCE [LARGE SCALE MRNA]</scope>
    <source>
        <tissue evidence="25">Brain</tissue>
    </source>
</reference>
<reference evidence="24 26" key="5">
    <citation type="submission" date="2003-07" db="EMBL/GenBank/DDBJ databases">
        <title>Cloning and characterization of a novel human cDNA homologous to human DCHT mRNA.</title>
        <authorList>
            <person name="Ding J.B."/>
            <person name="Yu L."/>
            <person name="Gong R.M."/>
            <person name="Mao N.H."/>
            <person name="Han X.F."/>
            <person name="Zhao S.Y."/>
        </authorList>
    </citation>
    <scope>NUCLEOTIDE SEQUENCE [MRNA] OF 172-527</scope>
</reference>
<reference evidence="24" key="6">
    <citation type="journal article" date="2004" name="J. Biol. Chem.">
        <title>Characterization of OSR1, a member of the mammalian Ste20p/germinal center kinase subfamily.</title>
        <authorList>
            <person name="Chen W."/>
            <person name="Yazicioglu M."/>
            <person name="Cobb M.H."/>
        </authorList>
    </citation>
    <scope>FUNCTION</scope>
    <scope>AUTOPHOSPHORYLATION</scope>
    <scope>MUTAGENESIS OF LYS-46</scope>
</reference>
<reference key="7">
    <citation type="journal article" date="2006" name="Biochem. Biophys. Res. Commun.">
        <title>Identification of RELT homologues that associate with RELT and are phosphorylated by OSR1.</title>
        <authorList>
            <person name="Cusick J.K."/>
            <person name="Xu L.-G."/>
            <person name="Bin L.-H."/>
            <person name="Han K.-J."/>
            <person name="Shu H.-B."/>
        </authorList>
    </citation>
    <scope>FUNCTION</scope>
    <scope>MUTAGENESIS OF LYS-46</scope>
</reference>
<reference key="8">
    <citation type="journal article" date="2006" name="Biochem. J.">
        <title>Functional interactions of the SPAK/OSR1 kinases with their upstream activator WNK1 and downstream substrate NKCC1.</title>
        <authorList>
            <person name="Vitari A.C."/>
            <person name="Thastrup J."/>
            <person name="Rafiqi F.H."/>
            <person name="Deak M."/>
            <person name="Morrice N.A."/>
            <person name="Karlsson H.K."/>
            <person name="Alessi D.R."/>
        </authorList>
    </citation>
    <scope>FUNCTION</scope>
    <scope>CATALYTIC ACTIVITY</scope>
    <scope>ACTIVITY REGULATION</scope>
    <scope>PHOSPHORYLATION AT THR-185</scope>
    <scope>MUTAGENESIS OF THR-185</scope>
</reference>
<reference key="9">
    <citation type="journal article" date="2006" name="Proc. Natl. Acad. Sci. U.S.A.">
        <title>WNK1 and OSR1 regulate the Na+, K+, 2Cl- cotransporter in HeLa cells.</title>
        <authorList>
            <person name="Anselmo A.N."/>
            <person name="Earnest S."/>
            <person name="Chen W."/>
            <person name="Juang Y.C."/>
            <person name="Kim S.C."/>
            <person name="Zhao Y."/>
            <person name="Cobb M.H."/>
        </authorList>
    </citation>
    <scope>ACTIVITY REGULATION</scope>
    <scope>PHOSPHORYLATION AT THR-185</scope>
    <scope>MUTAGENESIS OF THR-185</scope>
</reference>
<reference key="10">
    <citation type="journal article" date="2006" name="Cell">
        <title>Global, in vivo, and site-specific phosphorylation dynamics in signaling networks.</title>
        <authorList>
            <person name="Olsen J.V."/>
            <person name="Blagoev B."/>
            <person name="Gnad F."/>
            <person name="Macek B."/>
            <person name="Kumar C."/>
            <person name="Mortensen P."/>
            <person name="Mann M."/>
        </authorList>
    </citation>
    <scope>PHOSPHORYLATION [LARGE SCALE ANALYSIS] AT SER-339</scope>
    <scope>IDENTIFICATION BY MASS SPECTROMETRY [LARGE SCALE ANALYSIS]</scope>
    <source>
        <tissue>Cervix carcinoma</tissue>
    </source>
</reference>
<reference key="11">
    <citation type="journal article" date="2007" name="J. Cell Biol.">
        <title>Regulation of activity and localization of the WNK1 protein kinase by hyperosmotic stress.</title>
        <authorList>
            <person name="Zagorska A."/>
            <person name="Pozo-Guisado E."/>
            <person name="Boudeau J."/>
            <person name="Vitari A.C."/>
            <person name="Rafiqi F.H."/>
            <person name="Thastrup J."/>
            <person name="Deak M."/>
            <person name="Campbell D.G."/>
            <person name="Morrice N.A."/>
            <person name="Prescott A.R."/>
            <person name="Alessi D.R."/>
        </authorList>
    </citation>
    <scope>ACTIVITY REGULATION</scope>
    <scope>PHOSPHORYLATION AT THR-185 AND SER-325</scope>
    <scope>MUTAGENESIS OF THR-185 AND SER-325</scope>
</reference>
<reference key="12">
    <citation type="journal article" date="2007" name="Science">
        <title>ATM and ATR substrate analysis reveals extensive protein networks responsive to DNA damage.</title>
        <authorList>
            <person name="Matsuoka S."/>
            <person name="Ballif B.A."/>
            <person name="Smogorzewska A."/>
            <person name="McDonald E.R. III"/>
            <person name="Hurov K.E."/>
            <person name="Luo J."/>
            <person name="Bakalarski C.E."/>
            <person name="Zhao Z."/>
            <person name="Solimini N."/>
            <person name="Lerenthal Y."/>
            <person name="Shiloh Y."/>
            <person name="Gygi S.P."/>
            <person name="Elledge S.J."/>
        </authorList>
    </citation>
    <scope>PHOSPHORYLATION [LARGE SCALE ANALYSIS] AT SER-427</scope>
    <scope>IDENTIFICATION BY MASS SPECTROMETRY [LARGE SCALE ANALYSIS]</scope>
    <source>
        <tissue>Embryonic kidney</tissue>
    </source>
</reference>
<reference key="13">
    <citation type="journal article" date="2008" name="J. Cell Sci.">
        <title>Activation of the thiazide-sensitive Na+-Cl- cotransporter by the WNK-regulated kinases SPAK and OSR1.</title>
        <authorList>
            <person name="Richardson C."/>
            <person name="Rafiqi F.H."/>
            <person name="Karlsson H.K."/>
            <person name="Moleleki N."/>
            <person name="Vandewalle A."/>
            <person name="Campbell D.G."/>
            <person name="Morrice N.A."/>
            <person name="Alessi D.R."/>
        </authorList>
    </citation>
    <scope>FUNCTION</scope>
    <scope>CATALYTIC ACTIVITY</scope>
</reference>
<reference key="14">
    <citation type="journal article" date="2008" name="Proc. Natl. Acad. Sci. U.S.A.">
        <title>A quantitative atlas of mitotic phosphorylation.</title>
        <authorList>
            <person name="Dephoure N."/>
            <person name="Zhou C."/>
            <person name="Villen J."/>
            <person name="Beausoleil S.A."/>
            <person name="Bakalarski C.E."/>
            <person name="Elledge S.J."/>
            <person name="Gygi S.P."/>
        </authorList>
    </citation>
    <scope>PHOSPHORYLATION [LARGE SCALE ANALYSIS] AT SER-339 AND SER-427</scope>
    <scope>IDENTIFICATION BY MASS SPECTROMETRY [LARGE SCALE ANALYSIS]</scope>
    <source>
        <tissue>Cervix carcinoma</tissue>
    </source>
</reference>
<reference key="15">
    <citation type="journal article" date="2008" name="Proteomics">
        <title>Large-scale phosphoproteome analysis of human liver tissue by enrichment and fractionation of phosphopeptides with strong anion exchange chromatography.</title>
        <authorList>
            <person name="Han G."/>
            <person name="Ye M."/>
            <person name="Zhou H."/>
            <person name="Jiang X."/>
            <person name="Feng S."/>
            <person name="Jiang X."/>
            <person name="Tian R."/>
            <person name="Wan D."/>
            <person name="Zou H."/>
            <person name="Gu J."/>
        </authorList>
    </citation>
    <scope>PHOSPHORYLATION [LARGE SCALE ANALYSIS] AT SER-339</scope>
    <scope>IDENTIFICATION BY MASS SPECTROMETRY [LARGE SCALE ANALYSIS]</scope>
    <source>
        <tissue>Liver</tissue>
    </source>
</reference>
<reference key="16">
    <citation type="journal article" date="2009" name="Anal. Chem.">
        <title>Lys-N and trypsin cover complementary parts of the phosphoproteome in a refined SCX-based approach.</title>
        <authorList>
            <person name="Gauci S."/>
            <person name="Helbig A.O."/>
            <person name="Slijper M."/>
            <person name="Krijgsveld J."/>
            <person name="Heck A.J."/>
            <person name="Mohammed S."/>
        </authorList>
    </citation>
    <scope>IDENTIFICATION BY MASS SPECTROMETRY [LARGE SCALE ANALYSIS]</scope>
</reference>
<reference key="17">
    <citation type="journal article" date="2009" name="Cell">
        <title>Sites of regulated phosphorylation that control K-Cl cotransporter activity.</title>
        <authorList>
            <person name="Rinehart J."/>
            <person name="Maksimova Y.D."/>
            <person name="Tanis J.E."/>
            <person name="Stone K.L."/>
            <person name="Hodson C.A."/>
            <person name="Zhang J."/>
            <person name="Risinger M."/>
            <person name="Pan W."/>
            <person name="Wu D."/>
            <person name="Colangelo C.M."/>
            <person name="Forbush B."/>
            <person name="Joiner C.H."/>
            <person name="Gulcicek E.E."/>
            <person name="Gallagher P.G."/>
            <person name="Lifton R.P."/>
        </authorList>
    </citation>
    <scope>FUNCTION</scope>
</reference>
<reference key="18">
    <citation type="journal article" date="2009" name="Sci. Signal.">
        <title>Quantitative phosphoproteomic analysis of T cell receptor signaling reveals system-wide modulation of protein-protein interactions.</title>
        <authorList>
            <person name="Mayya V."/>
            <person name="Lundgren D.H."/>
            <person name="Hwang S.-I."/>
            <person name="Rezaul K."/>
            <person name="Wu L."/>
            <person name="Eng J.K."/>
            <person name="Rodionov V."/>
            <person name="Han D.K."/>
        </authorList>
    </citation>
    <scope>PHOSPHORYLATION [LARGE SCALE ANALYSIS] AT SER-339 AND SER-347</scope>
    <scope>IDENTIFICATION BY MASS SPECTROMETRY [LARGE SCALE ANALYSIS]</scope>
    <source>
        <tissue>Leukemic T-cell</tissue>
    </source>
</reference>
<reference key="19">
    <citation type="journal article" date="2010" name="Sci. Signal.">
        <title>Quantitative phosphoproteomics reveals widespread full phosphorylation site occupancy during mitosis.</title>
        <authorList>
            <person name="Olsen J.V."/>
            <person name="Vermeulen M."/>
            <person name="Santamaria A."/>
            <person name="Kumar C."/>
            <person name="Miller M.L."/>
            <person name="Jensen L.J."/>
            <person name="Gnad F."/>
            <person name="Cox J."/>
            <person name="Jensen T.S."/>
            <person name="Nigg E.A."/>
            <person name="Brunak S."/>
            <person name="Mann M."/>
        </authorList>
    </citation>
    <scope>PHOSPHORYLATION [LARGE SCALE ANALYSIS] AT SER-339 AND SER-427</scope>
    <scope>IDENTIFICATION BY MASS SPECTROMETRY [LARGE SCALE ANALYSIS]</scope>
    <source>
        <tissue>Cervix carcinoma</tissue>
    </source>
</reference>
<reference key="20">
    <citation type="journal article" date="2011" name="BMC Syst. Biol.">
        <title>Initial characterization of the human central proteome.</title>
        <authorList>
            <person name="Burkard T.R."/>
            <person name="Planyavsky M."/>
            <person name="Kaupe I."/>
            <person name="Breitwieser F.P."/>
            <person name="Buerckstuemmer T."/>
            <person name="Bennett K.L."/>
            <person name="Superti-Furga G."/>
            <person name="Colinge J."/>
        </authorList>
    </citation>
    <scope>IDENTIFICATION BY MASS SPECTROMETRY [LARGE SCALE ANALYSIS]</scope>
</reference>
<reference key="21">
    <citation type="journal article" date="2011" name="J. Cell Sci.">
        <title>Regulation of the NKCC2 ion cotransporter by SPAK-OSR1-dependent and -independent pathways.</title>
        <authorList>
            <person name="Richardson C."/>
            <person name="Sakamoto K."/>
            <person name="de los Heros P."/>
            <person name="Deak M."/>
            <person name="Campbell D.G."/>
            <person name="Prescott A.R."/>
            <person name="Alessi D.R."/>
        </authorList>
    </citation>
    <scope>FUNCTION</scope>
    <scope>CATALYTIC ACTIVITY</scope>
    <scope>ACTIVITY REGULATION</scope>
    <scope>PHOSPHORYLATION AT THR-185</scope>
    <scope>MUTAGENESIS OF THR-185</scope>
</reference>
<reference key="22">
    <citation type="journal article" date="2011" name="Sci. Signal.">
        <title>System-wide temporal characterization of the proteome and phosphoproteome of human embryonic stem cell differentiation.</title>
        <authorList>
            <person name="Rigbolt K.T."/>
            <person name="Prokhorova T.A."/>
            <person name="Akimov V."/>
            <person name="Henningsen J."/>
            <person name="Johansen P.T."/>
            <person name="Kratchmarova I."/>
            <person name="Kassem M."/>
            <person name="Mann M."/>
            <person name="Olsen J.V."/>
            <person name="Blagoev B."/>
        </authorList>
    </citation>
    <scope>PHOSPHORYLATION [LARGE SCALE ANALYSIS] AT SER-339</scope>
    <scope>IDENTIFICATION BY MASS SPECTROMETRY [LARGE SCALE ANALYSIS]</scope>
</reference>
<reference key="23">
    <citation type="journal article" date="2012" name="J. Biol. Chem.">
        <title>Interactions with WNK (with no lysine) family members regulate oxidative stress response 1 and ion co-transporter activity.</title>
        <authorList>
            <person name="Sengupta S."/>
            <person name="Tu S.W."/>
            <person name="Wedin K."/>
            <person name="Earnest S."/>
            <person name="Stippec S."/>
            <person name="Luby-Phelps K."/>
            <person name="Cobb M.H."/>
        </authorList>
    </citation>
    <scope>SUBCELLULAR LOCATION</scope>
    <scope>ACTIVITY REGULATION</scope>
    <scope>PHOSPHORYLATION</scope>
</reference>
<reference key="24">
    <citation type="journal article" date="2012" name="J. Proteomics">
        <title>Systematic validation of antibody binding and protein subcellular localization using siRNA and confocal microscopy.</title>
        <authorList>
            <person name="Stadler C."/>
            <person name="Hjelmare M."/>
            <person name="Neumann B."/>
            <person name="Jonasson K."/>
            <person name="Pepperkok R."/>
            <person name="Uhlen M."/>
            <person name="Lundberg E."/>
        </authorList>
    </citation>
    <scope>SUBCELLULAR LOCATION</scope>
</reference>
<reference key="25">
    <citation type="journal article" date="2012" name="Mol. Cell. Biochem.">
        <title>Identification of PLSCR1 as a protein that interacts with RELT family members.</title>
        <authorList>
            <person name="Cusick J.K."/>
            <person name="Mustian A."/>
            <person name="Jacobs A.T."/>
            <person name="Reyland M.E."/>
        </authorList>
    </citation>
    <scope>FUNCTION</scope>
    <scope>AUTOPHOSPHORYLATION</scope>
</reference>
<reference key="26">
    <citation type="journal article" date="2012" name="Mol. Cell. Proteomics">
        <title>Comparative large-scale characterisation of plant vs. mammal proteins reveals similar and idiosyncratic N-alpha acetylation features.</title>
        <authorList>
            <person name="Bienvenut W.V."/>
            <person name="Sumpton D."/>
            <person name="Martinez A."/>
            <person name="Lilla S."/>
            <person name="Espagne C."/>
            <person name="Meinnel T."/>
            <person name="Giglione C."/>
        </authorList>
    </citation>
    <scope>ACETYLATION [LARGE SCALE ANALYSIS] AT SER-2</scope>
    <scope>CLEAVAGE OF INITIATOR METHIONINE [LARGE SCALE ANALYSIS]</scope>
    <scope>IDENTIFICATION BY MASS SPECTROMETRY [LARGE SCALE ANALYSIS]</scope>
</reference>
<reference key="27">
    <citation type="journal article" date="2013" name="J. Proteome Res.">
        <title>Toward a comprehensive characterization of a human cancer cell phosphoproteome.</title>
        <authorList>
            <person name="Zhou H."/>
            <person name="Di Palma S."/>
            <person name="Preisinger C."/>
            <person name="Peng M."/>
            <person name="Polat A.N."/>
            <person name="Heck A.J."/>
            <person name="Mohammed S."/>
        </authorList>
    </citation>
    <scope>PHOSPHORYLATION [LARGE SCALE ANALYSIS] AT THR-310; SER-324; SER-325; SER-339 AND SER-359</scope>
    <scope>IDENTIFICATION BY MASS SPECTROMETRY [LARGE SCALE ANALYSIS]</scope>
    <source>
        <tissue>Cervix carcinoma</tissue>
        <tissue>Erythroleukemia</tissue>
    </source>
</reference>
<reference key="28">
    <citation type="journal article" date="2013" name="J. Biol. Chem.">
        <title>WNK1 protein kinase regulates embryonic cardiovascular development through the OSR1 signaling cascade.</title>
        <authorList>
            <person name="Xie J."/>
            <person name="Yoon J."/>
            <person name="Yang S.S."/>
            <person name="Lin S.H."/>
            <person name="Huang C.L."/>
        </authorList>
    </citation>
    <scope>FUNCTION</scope>
    <scope>ACTIVITY REGULATION</scope>
    <scope>PHOSPHORYLATION AT THR-185 AND SER-325</scope>
    <scope>MUTAGENESIS OF THR-185 AND SER-325</scope>
</reference>
<reference key="29">
    <citation type="journal article" date="2014" name="J. Proteomics">
        <title>An enzyme assisted RP-RPLC approach for in-depth analysis of human liver phosphoproteome.</title>
        <authorList>
            <person name="Bian Y."/>
            <person name="Song C."/>
            <person name="Cheng K."/>
            <person name="Dong M."/>
            <person name="Wang F."/>
            <person name="Huang J."/>
            <person name="Sun D."/>
            <person name="Wang L."/>
            <person name="Ye M."/>
            <person name="Zou H."/>
        </authorList>
    </citation>
    <scope>PHOSPHORYLATION [LARGE SCALE ANALYSIS] AT SER-339</scope>
    <scope>IDENTIFICATION BY MASS SPECTROMETRY [LARGE SCALE ANALYSIS]</scope>
    <source>
        <tissue>Liver</tissue>
    </source>
</reference>
<reference key="30">
    <citation type="journal article" date="2014" name="Proc. Natl. Acad. Sci. U.S.A.">
        <title>Actions of the protein kinase WNK1 on endothelial cells are differentially mediated by its substrate kinases OSR1 and SPAK.</title>
        <authorList>
            <person name="Dbouk H.A."/>
            <person name="Weil L.M."/>
            <person name="Perera G.K."/>
            <person name="Dellinger M.T."/>
            <person name="Pearson G."/>
            <person name="Brekken R.A."/>
            <person name="Cobb M.H."/>
        </authorList>
    </citation>
    <scope>FUNCTION</scope>
</reference>
<reference key="31">
    <citation type="journal article" date="2017" name="Biochem. Biophys. Res. Commun.">
        <title>RELT family members activate p38 and induce apoptosis by a mechanism distinct from TNFR1.</title>
        <authorList>
            <person name="Moua P."/>
            <person name="Checketts M."/>
            <person name="Xu L.G."/>
            <person name="Shu H.B."/>
            <person name="Reyland M.E."/>
            <person name="Cusick J.K."/>
        </authorList>
    </citation>
    <scope>FUNCTION</scope>
</reference>
<reference key="32">
    <citation type="journal article" date="2018" name="Proc. Natl. Acad. Sci. U.S.A.">
        <title>OSR1 regulates a subset of inward rectifier potassium channels via a binding motif variant.</title>
        <authorList>
            <person name="Taylor C.A. IV"/>
            <person name="An S.W."/>
            <person name="Kankanamalage S.G."/>
            <person name="Stippec S."/>
            <person name="Earnest S."/>
            <person name="Trivedi A.T."/>
            <person name="Yang J.Z."/>
            <person name="Mirzaei H."/>
            <person name="Huang C.L."/>
            <person name="Cobb M.H."/>
        </authorList>
    </citation>
    <scope>FUNCTION</scope>
    <scope>CATALYTIC ACTIVITY</scope>
    <scope>ACTIVITY REGULATION</scope>
    <scope>PHOSPHORYLATION AT THR-185 AND SER-325</scope>
    <scope>MUTAGENESIS OF THR-185 AND SER-325</scope>
</reference>
<reference key="33">
    <citation type="journal article" date="2021" name="Cell Rep.">
        <title>Phosphorylated WNK kinase networks in recoded bacteria recapitulate physiological function.</title>
        <authorList>
            <person name="Schiapparelli P."/>
            <person name="Pirman N.L."/>
            <person name="Mohler K."/>
            <person name="Miranda-Herrera P.A."/>
            <person name="Zarco N."/>
            <person name="Kilic O."/>
            <person name="Miller C."/>
            <person name="Shah S.R."/>
            <person name="Rogulina S."/>
            <person name="Hungerford W."/>
            <person name="Abriola L."/>
            <person name="Hoyer D."/>
            <person name="Turk B.E."/>
            <person name="Guerrero-Cazares H."/>
            <person name="Isaacs F.J."/>
            <person name="Quinones-Hinojosa A."/>
            <person name="Levchenko A."/>
            <person name="Rinehart J."/>
        </authorList>
    </citation>
    <scope>FUNCTION</scope>
    <scope>ACTIVITY REGULATION</scope>
</reference>
<reference evidence="30" key="34">
    <citation type="journal article" date="2007" name="EMBO Rep.">
        <title>Structural insights into the recognition of substrates and activators by the OSR1 kinase.</title>
        <authorList>
            <person name="Villa F."/>
            <person name="Goebel J."/>
            <person name="Rafiqi F.H."/>
            <person name="Deak M."/>
            <person name="Thastrup J."/>
            <person name="Alessi D.R."/>
            <person name="van Aalten D.M."/>
        </authorList>
    </citation>
    <scope>X-RAY CRYSTALLOGRAPHY (1.70 ANGSTROMS) OF 433-527 IN COMPLEX WITH WNK4</scope>
    <scope>FUNCTION</scope>
    <scope>MUTAGENESIS OF GLU-446; ASN-448; ASP-449; ILE-450; ARG-451; ASP-459; GLU-467; LEU-468; ALA-471 AND LEU-473</scope>
</reference>
<reference key="35">
    <citation type="journal article" date="2007" name="Nature">
        <title>Patterns of somatic mutation in human cancer genomes.</title>
        <authorList>
            <person name="Greenman C."/>
            <person name="Stephens P."/>
            <person name="Smith R."/>
            <person name="Dalgliesh G.L."/>
            <person name="Hunter C."/>
            <person name="Bignell G."/>
            <person name="Davies H."/>
            <person name="Teague J."/>
            <person name="Butler A."/>
            <person name="Stevens C."/>
            <person name="Edkins S."/>
            <person name="O'Meara S."/>
            <person name="Vastrik I."/>
            <person name="Schmidt E.E."/>
            <person name="Avis T."/>
            <person name="Barthorpe S."/>
            <person name="Bhamra G."/>
            <person name="Buck G."/>
            <person name="Choudhury B."/>
            <person name="Clements J."/>
            <person name="Cole J."/>
            <person name="Dicks E."/>
            <person name="Forbes S."/>
            <person name="Gray K."/>
            <person name="Halliday K."/>
            <person name="Harrison R."/>
            <person name="Hills K."/>
            <person name="Hinton J."/>
            <person name="Jenkinson A."/>
            <person name="Jones D."/>
            <person name="Menzies A."/>
            <person name="Mironenko T."/>
            <person name="Perry J."/>
            <person name="Raine K."/>
            <person name="Richardson D."/>
            <person name="Shepherd R."/>
            <person name="Small A."/>
            <person name="Tofts C."/>
            <person name="Varian J."/>
            <person name="Webb T."/>
            <person name="West S."/>
            <person name="Widaa S."/>
            <person name="Yates A."/>
            <person name="Cahill D.P."/>
            <person name="Louis D.N."/>
            <person name="Goldstraw P."/>
            <person name="Nicholson A.G."/>
            <person name="Brasseur F."/>
            <person name="Looijenga L."/>
            <person name="Weber B.L."/>
            <person name="Chiew Y.-E."/>
            <person name="DeFazio A."/>
            <person name="Greaves M.F."/>
            <person name="Green A.R."/>
            <person name="Campbell P."/>
            <person name="Birney E."/>
            <person name="Easton D.F."/>
            <person name="Chenevix-Trench G."/>
            <person name="Tan M.-H."/>
            <person name="Khoo S.K."/>
            <person name="Teh B.T."/>
            <person name="Yuen S.T."/>
            <person name="Leung S.Y."/>
            <person name="Wooster R."/>
            <person name="Futreal P.A."/>
            <person name="Stratton M.R."/>
        </authorList>
    </citation>
    <scope>VARIANTS [LARGE SCALE ANALYSIS] ILE-304 AND SER-433</scope>
</reference>
<dbReference type="EC" id="2.7.11.1" evidence="7 12 14"/>
<dbReference type="EMBL" id="AB017642">
    <property type="protein sequence ID" value="BAA75674.1"/>
    <property type="molecule type" value="mRNA"/>
</dbReference>
<dbReference type="EMBL" id="AB029024">
    <property type="protein sequence ID" value="BAA83053.2"/>
    <property type="status" value="ALT_FRAME"/>
    <property type="molecule type" value="mRNA"/>
</dbReference>
<dbReference type="EMBL" id="DQ201638">
    <property type="protein sequence ID" value="ABA27097.1"/>
    <property type="molecule type" value="Genomic_DNA"/>
</dbReference>
<dbReference type="EMBL" id="BC008726">
    <property type="protein sequence ID" value="AAH08726.1"/>
    <property type="molecule type" value="mRNA"/>
</dbReference>
<dbReference type="EMBL" id="AF087893">
    <property type="protein sequence ID" value="AAP97192.1"/>
    <property type="status" value="ALT_INIT"/>
    <property type="molecule type" value="mRNA"/>
</dbReference>
<dbReference type="CCDS" id="CCDS2675.1"/>
<dbReference type="RefSeq" id="NP_005100.1">
    <property type="nucleotide sequence ID" value="NM_005109.3"/>
</dbReference>
<dbReference type="PDB" id="2V3S">
    <property type="method" value="X-ray"/>
    <property type="resolution" value="1.70 A"/>
    <property type="chains" value="A/B=433-527"/>
</dbReference>
<dbReference type="PDB" id="2VWI">
    <property type="method" value="X-ray"/>
    <property type="resolution" value="2.15 A"/>
    <property type="chains" value="A/B/C/D=1-303"/>
</dbReference>
<dbReference type="PDB" id="3DAK">
    <property type="method" value="X-ray"/>
    <property type="resolution" value="2.25 A"/>
    <property type="chains" value="A/B/C/D=6-295"/>
</dbReference>
<dbReference type="PDB" id="7OKW">
    <property type="method" value="X-ray"/>
    <property type="resolution" value="1.62 A"/>
    <property type="chains" value="A/B=423-527"/>
</dbReference>
<dbReference type="PDBsum" id="2V3S"/>
<dbReference type="PDBsum" id="2VWI"/>
<dbReference type="PDBsum" id="3DAK"/>
<dbReference type="PDBsum" id="7OKW"/>
<dbReference type="SMR" id="O95747"/>
<dbReference type="BioGRID" id="115269">
    <property type="interactions" value="178"/>
</dbReference>
<dbReference type="CORUM" id="O95747"/>
<dbReference type="DIP" id="DIP-34977N"/>
<dbReference type="ELM" id="O95747"/>
<dbReference type="FunCoup" id="O95747">
    <property type="interactions" value="2820"/>
</dbReference>
<dbReference type="IntAct" id="O95747">
    <property type="interactions" value="104"/>
</dbReference>
<dbReference type="MINT" id="O95747"/>
<dbReference type="STRING" id="9606.ENSP00000311713"/>
<dbReference type="BindingDB" id="O95747"/>
<dbReference type="ChEMBL" id="CHEMBL1163104"/>
<dbReference type="DrugBank" id="DB12010">
    <property type="generic name" value="Fostamatinib"/>
</dbReference>
<dbReference type="DrugCentral" id="O95747"/>
<dbReference type="GlyGen" id="O95747">
    <property type="glycosylation" value="2 sites, 1 N-linked glycan (1 site), 1 O-linked glycan (1 site)"/>
</dbReference>
<dbReference type="iPTMnet" id="O95747"/>
<dbReference type="PhosphoSitePlus" id="O95747"/>
<dbReference type="SwissPalm" id="O95747"/>
<dbReference type="BioMuta" id="OXSR1"/>
<dbReference type="jPOST" id="O95747"/>
<dbReference type="MassIVE" id="O95747"/>
<dbReference type="PaxDb" id="9606-ENSP00000311713"/>
<dbReference type="PeptideAtlas" id="O95747"/>
<dbReference type="ProteomicsDB" id="51019"/>
<dbReference type="Pumba" id="O95747"/>
<dbReference type="Antibodypedia" id="2101">
    <property type="antibodies" value="550 antibodies from 37 providers"/>
</dbReference>
<dbReference type="DNASU" id="9943"/>
<dbReference type="Ensembl" id="ENST00000311806.8">
    <property type="protein sequence ID" value="ENSP00000311713.3"/>
    <property type="gene ID" value="ENSG00000172939.9"/>
</dbReference>
<dbReference type="GeneID" id="9943"/>
<dbReference type="KEGG" id="hsa:9943"/>
<dbReference type="MANE-Select" id="ENST00000311806.8">
    <property type="protein sequence ID" value="ENSP00000311713.3"/>
    <property type="RefSeq nucleotide sequence ID" value="NM_005109.3"/>
    <property type="RefSeq protein sequence ID" value="NP_005100.1"/>
</dbReference>
<dbReference type="UCSC" id="uc003chy.4">
    <property type="organism name" value="human"/>
</dbReference>
<dbReference type="AGR" id="HGNC:8508"/>
<dbReference type="CTD" id="9943"/>
<dbReference type="DisGeNET" id="9943"/>
<dbReference type="GeneCards" id="OXSR1"/>
<dbReference type="HGNC" id="HGNC:8508">
    <property type="gene designation" value="OXSR1"/>
</dbReference>
<dbReference type="HPA" id="ENSG00000172939">
    <property type="expression patterns" value="Low tissue specificity"/>
</dbReference>
<dbReference type="MalaCards" id="OXSR1"/>
<dbReference type="MIM" id="604046">
    <property type="type" value="gene"/>
</dbReference>
<dbReference type="neXtProt" id="NX_O95747"/>
<dbReference type="OpenTargets" id="ENSG00000172939"/>
<dbReference type="PharmGKB" id="PA134973207"/>
<dbReference type="VEuPathDB" id="HostDB:ENSG00000172939"/>
<dbReference type="eggNOG" id="KOG0582">
    <property type="taxonomic scope" value="Eukaryota"/>
</dbReference>
<dbReference type="GeneTree" id="ENSGT00940000162134"/>
<dbReference type="HOGENOM" id="CLU_000288_111_1_1"/>
<dbReference type="InParanoid" id="O95747"/>
<dbReference type="OMA" id="KMRTANC"/>
<dbReference type="OrthoDB" id="8693905at2759"/>
<dbReference type="PAN-GO" id="O95747">
    <property type="GO annotations" value="7 GO annotations based on evolutionary models"/>
</dbReference>
<dbReference type="PhylomeDB" id="O95747"/>
<dbReference type="TreeFam" id="TF105339"/>
<dbReference type="PathwayCommons" id="O95747"/>
<dbReference type="SignaLink" id="O95747"/>
<dbReference type="SIGNOR" id="O95747"/>
<dbReference type="BioGRID-ORCS" id="9943">
    <property type="hits" value="23 hits in 1194 CRISPR screens"/>
</dbReference>
<dbReference type="ChiTaRS" id="OXSR1">
    <property type="organism name" value="human"/>
</dbReference>
<dbReference type="EvolutionaryTrace" id="O95747"/>
<dbReference type="GeneWiki" id="OXSR1"/>
<dbReference type="GenomeRNAi" id="9943"/>
<dbReference type="Pharos" id="O95747">
    <property type="development level" value="Tbio"/>
</dbReference>
<dbReference type="PRO" id="PR:O95747"/>
<dbReference type="Proteomes" id="UP000005640">
    <property type="component" value="Chromosome 3"/>
</dbReference>
<dbReference type="RNAct" id="O95747">
    <property type="molecule type" value="protein"/>
</dbReference>
<dbReference type="Bgee" id="ENSG00000172939">
    <property type="expression patterns" value="Expressed in buccal mucosa cell and 209 other cell types or tissues"/>
</dbReference>
<dbReference type="ExpressionAtlas" id="O95747">
    <property type="expression patterns" value="baseline and differential"/>
</dbReference>
<dbReference type="GO" id="GO:0005737">
    <property type="term" value="C:cytoplasm"/>
    <property type="evidence" value="ECO:0000314"/>
    <property type="project" value="UniProt"/>
</dbReference>
<dbReference type="GO" id="GO:0005829">
    <property type="term" value="C:cytosol"/>
    <property type="evidence" value="ECO:0000314"/>
    <property type="project" value="HPA"/>
</dbReference>
<dbReference type="GO" id="GO:0070062">
    <property type="term" value="C:extracellular exosome"/>
    <property type="evidence" value="ECO:0007005"/>
    <property type="project" value="UniProtKB"/>
</dbReference>
<dbReference type="GO" id="GO:0005524">
    <property type="term" value="F:ATP binding"/>
    <property type="evidence" value="ECO:0000314"/>
    <property type="project" value="UniProtKB"/>
</dbReference>
<dbReference type="GO" id="GO:0042802">
    <property type="term" value="F:identical protein binding"/>
    <property type="evidence" value="ECO:0000353"/>
    <property type="project" value="IntAct"/>
</dbReference>
<dbReference type="GO" id="GO:0099106">
    <property type="term" value="F:ion channel regulator activity"/>
    <property type="evidence" value="ECO:0000315"/>
    <property type="project" value="ParkinsonsUK-UCL"/>
</dbReference>
<dbReference type="GO" id="GO:0000287">
    <property type="term" value="F:magnesium ion binding"/>
    <property type="evidence" value="ECO:0000314"/>
    <property type="project" value="UniProtKB"/>
</dbReference>
<dbReference type="GO" id="GO:0019870">
    <property type="term" value="F:potassium channel inhibitor activity"/>
    <property type="evidence" value="ECO:0000314"/>
    <property type="project" value="ParkinsonsUK-UCL"/>
</dbReference>
<dbReference type="GO" id="GO:0019901">
    <property type="term" value="F:protein kinase binding"/>
    <property type="evidence" value="ECO:0000353"/>
    <property type="project" value="ParkinsonsUK-UCL"/>
</dbReference>
<dbReference type="GO" id="GO:0106310">
    <property type="term" value="F:protein serine kinase activity"/>
    <property type="evidence" value="ECO:0007669"/>
    <property type="project" value="RHEA"/>
</dbReference>
<dbReference type="GO" id="GO:0004674">
    <property type="term" value="F:protein serine/threonine kinase activity"/>
    <property type="evidence" value="ECO:0000314"/>
    <property type="project" value="UniProtKB"/>
</dbReference>
<dbReference type="GO" id="GO:0044325">
    <property type="term" value="F:transmembrane transporter binding"/>
    <property type="evidence" value="ECO:0000353"/>
    <property type="project" value="ParkinsonsUK-UCL"/>
</dbReference>
<dbReference type="GO" id="GO:0006884">
    <property type="term" value="P:cell volume homeostasis"/>
    <property type="evidence" value="ECO:0000314"/>
    <property type="project" value="UniProt"/>
</dbReference>
<dbReference type="GO" id="GO:0071474">
    <property type="term" value="P:cellular hyperosmotic response"/>
    <property type="evidence" value="ECO:0000314"/>
    <property type="project" value="UniProt"/>
</dbReference>
<dbReference type="GO" id="GO:0071476">
    <property type="term" value="P:cellular hypotonic response"/>
    <property type="evidence" value="ECO:0007669"/>
    <property type="project" value="Ensembl"/>
</dbReference>
<dbReference type="GO" id="GO:1990869">
    <property type="term" value="P:cellular response to chemokine"/>
    <property type="evidence" value="ECO:0000315"/>
    <property type="project" value="BHF-UCL"/>
</dbReference>
<dbReference type="GO" id="GO:0038116">
    <property type="term" value="P:chemokine (C-C motif) ligand 21 signaling pathway"/>
    <property type="evidence" value="ECO:0000250"/>
    <property type="project" value="BHF-UCL"/>
</dbReference>
<dbReference type="GO" id="GO:0038146">
    <property type="term" value="P:chemokine (C-X-C motif) ligand 12 signaling pathway"/>
    <property type="evidence" value="ECO:0000315"/>
    <property type="project" value="BHF-UCL"/>
</dbReference>
<dbReference type="GO" id="GO:0035556">
    <property type="term" value="P:intracellular signal transduction"/>
    <property type="evidence" value="ECO:0000314"/>
    <property type="project" value="UniProtKB"/>
</dbReference>
<dbReference type="GO" id="GO:1901380">
    <property type="term" value="P:negative regulation of potassium ion transmembrane transport"/>
    <property type="evidence" value="ECO:0007669"/>
    <property type="project" value="Ensembl"/>
</dbReference>
<dbReference type="GO" id="GO:0007231">
    <property type="term" value="P:osmosensory signaling pathway"/>
    <property type="evidence" value="ECO:0000315"/>
    <property type="project" value="ParkinsonsUK-UCL"/>
</dbReference>
<dbReference type="GO" id="GO:0010820">
    <property type="term" value="P:positive regulation of T cell chemotaxis"/>
    <property type="evidence" value="ECO:0000315"/>
    <property type="project" value="BHF-UCL"/>
</dbReference>
<dbReference type="GO" id="GO:0046777">
    <property type="term" value="P:protein autophosphorylation"/>
    <property type="evidence" value="ECO:0000314"/>
    <property type="project" value="UniProtKB"/>
</dbReference>
<dbReference type="GO" id="GO:0006468">
    <property type="term" value="P:protein phosphorylation"/>
    <property type="evidence" value="ECO:0000314"/>
    <property type="project" value="UniProtKB"/>
</dbReference>
<dbReference type="GO" id="GO:0070294">
    <property type="term" value="P:renal sodium ion absorption"/>
    <property type="evidence" value="ECO:0000314"/>
    <property type="project" value="UniProt"/>
</dbReference>
<dbReference type="GO" id="GO:0006979">
    <property type="term" value="P:response to oxidative stress"/>
    <property type="evidence" value="ECO:0000304"/>
    <property type="project" value="ProtInc"/>
</dbReference>
<dbReference type="GO" id="GO:0009410">
    <property type="term" value="P:response to xenobiotic stimulus"/>
    <property type="evidence" value="ECO:0007669"/>
    <property type="project" value="Ensembl"/>
</dbReference>
<dbReference type="GO" id="GO:0007165">
    <property type="term" value="P:signal transduction"/>
    <property type="evidence" value="ECO:0000315"/>
    <property type="project" value="ParkinsonsUK-UCL"/>
</dbReference>
<dbReference type="CDD" id="cd06610">
    <property type="entry name" value="STKc_OSR1_SPAK"/>
    <property type="match status" value="1"/>
</dbReference>
<dbReference type="FunFam" id="3.10.20.90:FF:000043">
    <property type="entry name" value="serine/threonine-protein kinase OSR1 isoform X1"/>
    <property type="match status" value="1"/>
</dbReference>
<dbReference type="FunFam" id="3.30.200.20:FF:000114">
    <property type="entry name" value="serine/threonine-protein kinase OSR1 isoform X1"/>
    <property type="match status" value="1"/>
</dbReference>
<dbReference type="FunFam" id="1.10.510.10:FF:000068">
    <property type="entry name" value="STE20/SPS1-related proline-alanine-rich protein kinase"/>
    <property type="match status" value="1"/>
</dbReference>
<dbReference type="Gene3D" id="3.10.20.90">
    <property type="entry name" value="Phosphatidylinositol 3-kinase Catalytic Subunit, Chain A, domain 1"/>
    <property type="match status" value="1"/>
</dbReference>
<dbReference type="Gene3D" id="3.30.200.20">
    <property type="entry name" value="Phosphorylase Kinase, domain 1"/>
    <property type="match status" value="1"/>
</dbReference>
<dbReference type="Gene3D" id="1.10.510.10">
    <property type="entry name" value="Transferase(Phosphotransferase) domain 1"/>
    <property type="match status" value="1"/>
</dbReference>
<dbReference type="InterPro" id="IPR011009">
    <property type="entry name" value="Kinase-like_dom_sf"/>
</dbReference>
<dbReference type="InterPro" id="IPR024678">
    <property type="entry name" value="Kinase_OSR1/WNK_CCT"/>
</dbReference>
<dbReference type="InterPro" id="IPR000719">
    <property type="entry name" value="Prot_kinase_dom"/>
</dbReference>
<dbReference type="InterPro" id="IPR017441">
    <property type="entry name" value="Protein_kinase_ATP_BS"/>
</dbReference>
<dbReference type="InterPro" id="IPR050629">
    <property type="entry name" value="STE20/SPS1-PAK"/>
</dbReference>
<dbReference type="PANTHER" id="PTHR48012:SF1">
    <property type="entry name" value="SERINE_THREONINE-PROTEIN KINASE OSR1"/>
    <property type="match status" value="1"/>
</dbReference>
<dbReference type="PANTHER" id="PTHR48012">
    <property type="entry name" value="STERILE20-LIKE KINASE, ISOFORM B-RELATED"/>
    <property type="match status" value="1"/>
</dbReference>
<dbReference type="Pfam" id="PF12202">
    <property type="entry name" value="OSR1_C"/>
    <property type="match status" value="1"/>
</dbReference>
<dbReference type="Pfam" id="PF00069">
    <property type="entry name" value="Pkinase"/>
    <property type="match status" value="1"/>
</dbReference>
<dbReference type="SMART" id="SM00220">
    <property type="entry name" value="S_TKc"/>
    <property type="match status" value="1"/>
</dbReference>
<dbReference type="SUPFAM" id="SSF56112">
    <property type="entry name" value="Protein kinase-like (PK-like)"/>
    <property type="match status" value="1"/>
</dbReference>
<dbReference type="PROSITE" id="PS00107">
    <property type="entry name" value="PROTEIN_KINASE_ATP"/>
    <property type="match status" value="1"/>
</dbReference>
<dbReference type="PROSITE" id="PS50011">
    <property type="entry name" value="PROTEIN_KINASE_DOM"/>
    <property type="match status" value="1"/>
</dbReference>
<organism>
    <name type="scientific">Homo sapiens</name>
    <name type="common">Human</name>
    <dbReference type="NCBI Taxonomy" id="9606"/>
    <lineage>
        <taxon>Eukaryota</taxon>
        <taxon>Metazoa</taxon>
        <taxon>Chordata</taxon>
        <taxon>Craniata</taxon>
        <taxon>Vertebrata</taxon>
        <taxon>Euteleostomi</taxon>
        <taxon>Mammalia</taxon>
        <taxon>Eutheria</taxon>
        <taxon>Euarchontoglires</taxon>
        <taxon>Primates</taxon>
        <taxon>Haplorrhini</taxon>
        <taxon>Catarrhini</taxon>
        <taxon>Hominidae</taxon>
        <taxon>Homo</taxon>
    </lineage>
</organism>
<protein>
    <recommendedName>
        <fullName>Serine/threonine-protein kinase OSR1</fullName>
        <ecNumber evidence="7 12 14">2.7.11.1</ecNumber>
    </recommendedName>
    <alternativeName>
        <fullName>Oxidative stress-responsive 1 protein</fullName>
    </alternativeName>
</protein>
<name>OXSR1_HUMAN</name>
<feature type="initiator methionine" description="Removed" evidence="38">
    <location>
        <position position="1"/>
    </location>
</feature>
<feature type="chain" id="PRO_0000086456" description="Serine/threonine-protein kinase OSR1">
    <location>
        <begin position="2"/>
        <end position="527"/>
    </location>
</feature>
<feature type="domain" description="Protein kinase" evidence="2">
    <location>
        <begin position="17"/>
        <end position="291"/>
    </location>
</feature>
<feature type="region of interest" description="Disordered" evidence="3">
    <location>
        <begin position="315"/>
        <end position="360"/>
    </location>
</feature>
<feature type="region of interest" description="Disordered" evidence="3">
    <location>
        <begin position="405"/>
        <end position="427"/>
    </location>
</feature>
<feature type="compositionally biased region" description="Acidic residues" evidence="3">
    <location>
        <begin position="334"/>
        <end position="348"/>
    </location>
</feature>
<feature type="active site" description="Proton acceptor" evidence="1 2">
    <location>
        <position position="146"/>
    </location>
</feature>
<feature type="binding site" evidence="1 2">
    <location>
        <begin position="23"/>
        <end position="31"/>
    </location>
    <ligand>
        <name>ATP</name>
        <dbReference type="ChEBI" id="CHEBI:30616"/>
    </ligand>
</feature>
<feature type="binding site" evidence="2 5">
    <location>
        <position position="46"/>
    </location>
    <ligand>
        <name>ATP</name>
        <dbReference type="ChEBI" id="CHEBI:30616"/>
    </ligand>
</feature>
<feature type="modified residue" description="N-acetylserine" evidence="38">
    <location>
        <position position="2"/>
    </location>
</feature>
<feature type="modified residue" description="Phosphothreonine; by WNK1" evidence="7 8 9 14 18 21">
    <location>
        <position position="185"/>
    </location>
</feature>
<feature type="modified residue" description="Phosphothreonine" evidence="39">
    <location>
        <position position="310"/>
    </location>
</feature>
<feature type="modified residue" description="Phosphoserine" evidence="39">
    <location>
        <position position="324"/>
    </location>
</feature>
<feature type="modified residue" description="Phosphoserine" evidence="9 18 21 39">
    <location>
        <position position="325"/>
    </location>
</feature>
<feature type="modified residue" description="Phosphoserine" evidence="31 33 34 35 36 37 39 40">
    <location>
        <position position="339"/>
    </location>
</feature>
<feature type="modified residue" description="Phosphoserine" evidence="35">
    <location>
        <position position="347"/>
    </location>
</feature>
<feature type="modified residue" description="Phosphoserine" evidence="39">
    <location>
        <position position="359"/>
    </location>
</feature>
<feature type="modified residue" description="Phosphoserine" evidence="32 34 36">
    <location>
        <position position="427"/>
    </location>
</feature>
<feature type="sequence variant" id="VAR_023232" description="In dbSNP:rs6599079." evidence="4 10 23">
    <original>T</original>
    <variation>I</variation>
    <location>
        <position position="304"/>
    </location>
</feature>
<feature type="sequence variant" id="VAR_025181" description="In dbSNP:rs35295772." evidence="23">
    <original>S</original>
    <variation>T</variation>
    <location>
        <position position="425"/>
    </location>
</feature>
<feature type="sequence variant" id="VAR_040969" description="In a metastatic melanoma sample; somatic mutation; dbSNP:rs1703170731." evidence="10">
    <original>P</original>
    <variation>S</variation>
    <location>
        <position position="433"/>
    </location>
</feature>
<feature type="mutagenesis site" description="Loss of autophosphorylation and kinase activity." evidence="5 6">
    <original>K</original>
    <variation>A</variation>
    <location>
        <position position="46"/>
    </location>
</feature>
<feature type="mutagenesis site" description="Loss of RELT, RELL1 and RELL2 phosphorylation. Retention of some autophosphorylation activity may be due to complex formation with other endogenous kinases in the assay." evidence="5 6">
    <original>K</original>
    <variation>M</variation>
    <location>
        <position position="46"/>
    </location>
</feature>
<feature type="mutagenesis site" description="Prevents phosphorylation and activation by WNK kinases." evidence="9">
    <original>T</original>
    <variation>A</variation>
    <location>
        <position position="185"/>
    </location>
</feature>
<feature type="mutagenesis site" description="Mimics phosphorylation; promoting kinase activity independently of WNK kinases." evidence="7 8 9 14 18 21">
    <original>T</original>
    <variation>E</variation>
    <variation>D</variation>
    <location>
        <position position="185"/>
    </location>
</feature>
<feature type="mutagenesis site" description="Does not affect activation by WNK kinases." evidence="9">
    <original>S</original>
    <variation>A</variation>
    <location>
        <position position="325"/>
    </location>
</feature>
<feature type="mutagenesis site" description="Mimics phosphorylation; slighlty promoting kinase activity independently of WNK kinases." evidence="9 18 21">
    <original>S</original>
    <variation>E</variation>
    <variation>D</variation>
    <location>
        <position position="325"/>
    </location>
</feature>
<feature type="mutagenesis site" description="Decreased interaction with WNK4." evidence="11">
    <original>E</original>
    <variation>A</variation>
    <location>
        <position position="446"/>
    </location>
</feature>
<feature type="mutagenesis site" description="Decreased interaction with WNK4." evidence="11">
    <original>N</original>
    <variation>A</variation>
    <location>
        <position position="448"/>
    </location>
</feature>
<feature type="mutagenesis site" description="Decreased interaction with WNK4." evidence="11">
    <original>D</original>
    <variation>A</variation>
    <location>
        <position position="449"/>
    </location>
</feature>
<feature type="mutagenesis site" description="Abolished interaction with WNK4." evidence="11">
    <original>I</original>
    <variation>A</variation>
    <location>
        <position position="450"/>
    </location>
</feature>
<feature type="mutagenesis site" description="Decreased interaction with WNK4." evidence="11">
    <original>R</original>
    <variation>A</variation>
    <location>
        <position position="451"/>
    </location>
</feature>
<feature type="mutagenesis site" description="Abolished interaction with SLC12A2/NKCC1 and WNK4." evidence="11">
    <original>D</original>
    <variation>A</variation>
    <location>
        <position position="459"/>
    </location>
</feature>
<feature type="mutagenesis site" description="Abolished interaction with WNK4." evidence="11">
    <original>E</original>
    <variation>A</variation>
    <location>
        <position position="467"/>
    </location>
</feature>
<feature type="mutagenesis site" description="Abolished interaction with WNK4." evidence="11">
    <original>L</original>
    <variation>F</variation>
    <location>
        <position position="468"/>
    </location>
</feature>
<feature type="mutagenesis site" description="Decreased interaction with WNK4." evidence="11">
    <original>A</original>
    <variation>L</variation>
    <location>
        <position position="471"/>
    </location>
</feature>
<feature type="mutagenesis site" description="Abolished interaction with SLC12A2/NKCC1 and WNK4." evidence="11">
    <original>L</original>
    <variation>A</variation>
    <location>
        <position position="473"/>
    </location>
</feature>
<feature type="sequence conflict" description="In Ref. 5; AAP97192." evidence="24" ref="5">
    <original>K</original>
    <variation>R</variation>
    <location>
        <position position="316"/>
    </location>
</feature>
<feature type="sequence conflict" description="In Ref. 5; AAP97192." evidence="24" ref="5">
    <original>S</original>
    <variation>G</variation>
    <location>
        <position position="325"/>
    </location>
</feature>
<feature type="sequence conflict" description="In Ref. 5; AAP97192." evidence="24" ref="5">
    <original>K</original>
    <variation>R</variation>
    <location>
        <position position="363"/>
    </location>
</feature>
<feature type="helix" evidence="43">
    <location>
        <begin position="14"/>
        <end position="16"/>
    </location>
</feature>
<feature type="strand" evidence="42">
    <location>
        <begin position="18"/>
        <end position="24"/>
    </location>
</feature>
<feature type="strand" evidence="42">
    <location>
        <begin position="31"/>
        <end position="35"/>
    </location>
</feature>
<feature type="turn" evidence="42">
    <location>
        <begin position="37"/>
        <end position="40"/>
    </location>
</feature>
<feature type="strand" evidence="42">
    <location>
        <begin position="42"/>
        <end position="46"/>
    </location>
</feature>
<feature type="turn" evidence="42">
    <location>
        <begin position="50"/>
        <end position="54"/>
    </location>
</feature>
<feature type="helix" evidence="42">
    <location>
        <begin position="57"/>
        <end position="65"/>
    </location>
</feature>
<feature type="strand" evidence="42">
    <location>
        <begin position="78"/>
        <end position="86"/>
    </location>
</feature>
<feature type="strand" evidence="42">
    <location>
        <begin position="88"/>
        <end position="93"/>
    </location>
</feature>
<feature type="helix" evidence="42">
    <location>
        <begin position="100"/>
        <end position="109"/>
    </location>
</feature>
<feature type="turn" evidence="42">
    <location>
        <begin position="110"/>
        <end position="115"/>
    </location>
</feature>
<feature type="helix" evidence="42">
    <location>
        <begin position="120"/>
        <end position="139"/>
    </location>
</feature>
<feature type="helix" evidence="42">
    <location>
        <begin position="149"/>
        <end position="151"/>
    </location>
</feature>
<feature type="strand" evidence="42">
    <location>
        <begin position="152"/>
        <end position="154"/>
    </location>
</feature>
<feature type="strand" evidence="42">
    <location>
        <begin position="160"/>
        <end position="162"/>
    </location>
</feature>
<feature type="helix" evidence="42">
    <location>
        <begin position="166"/>
        <end position="170"/>
    </location>
</feature>
<feature type="helix" evidence="42">
    <location>
        <begin position="195"/>
        <end position="202"/>
    </location>
</feature>
<feature type="helix" evidence="42">
    <location>
        <begin position="207"/>
        <end position="222"/>
    </location>
</feature>
<feature type="turn" evidence="42">
    <location>
        <begin position="226"/>
        <end position="229"/>
    </location>
</feature>
<feature type="helix" evidence="42">
    <location>
        <begin position="232"/>
        <end position="234"/>
    </location>
</feature>
<feature type="helix" evidence="42">
    <location>
        <begin position="235"/>
        <end position="240"/>
    </location>
</feature>
<feature type="turn" evidence="43">
    <location>
        <begin position="247"/>
        <end position="250"/>
    </location>
</feature>
<feature type="helix" evidence="43">
    <location>
        <begin position="254"/>
        <end position="257"/>
    </location>
</feature>
<feature type="helix" evidence="42">
    <location>
        <begin position="262"/>
        <end position="271"/>
    </location>
</feature>
<feature type="helix" evidence="42">
    <location>
        <begin position="276"/>
        <end position="278"/>
    </location>
</feature>
<feature type="helix" evidence="42">
    <location>
        <begin position="282"/>
        <end position="286"/>
    </location>
</feature>
<feature type="helix" evidence="43">
    <location>
        <begin position="289"/>
        <end position="293"/>
    </location>
</feature>
<feature type="strand" evidence="44">
    <location>
        <begin position="434"/>
        <end position="441"/>
    </location>
</feature>
<feature type="strand" evidence="44">
    <location>
        <begin position="447"/>
        <end position="454"/>
    </location>
</feature>
<feature type="turn" evidence="44">
    <location>
        <begin position="456"/>
        <end position="458"/>
    </location>
</feature>
<feature type="helix" evidence="44">
    <location>
        <begin position="461"/>
        <end position="470"/>
    </location>
</feature>
<feature type="helix" evidence="44">
    <location>
        <begin position="476"/>
        <end position="478"/>
    </location>
</feature>
<feature type="helix" evidence="44">
    <location>
        <begin position="479"/>
        <end position="491"/>
    </location>
</feature>
<feature type="turn" evidence="44">
    <location>
        <begin position="493"/>
        <end position="495"/>
    </location>
</feature>
<feature type="strand" evidence="44">
    <location>
        <begin position="496"/>
        <end position="502"/>
    </location>
</feature>
<feature type="helix" evidence="41">
    <location>
        <begin position="504"/>
        <end position="506"/>
    </location>
</feature>
<feature type="strand" evidence="41">
    <location>
        <begin position="507"/>
        <end position="511"/>
    </location>
</feature>
<feature type="turn" evidence="44">
    <location>
        <begin position="515"/>
        <end position="518"/>
    </location>
</feature>
<feature type="strand" evidence="44">
    <location>
        <begin position="519"/>
        <end position="526"/>
    </location>
</feature>